<evidence type="ECO:0000250" key="1"/>
<evidence type="ECO:0000255" key="2">
    <source>
        <dbReference type="PROSITE-ProRule" id="PRU00407"/>
    </source>
</evidence>
<evidence type="ECO:0000255" key="3">
    <source>
        <dbReference type="PROSITE-ProRule" id="PRU01189"/>
    </source>
</evidence>
<evidence type="ECO:0000256" key="4">
    <source>
        <dbReference type="SAM" id="MobiDB-lite"/>
    </source>
</evidence>
<evidence type="ECO:0000269" key="5">
    <source>
    </source>
</evidence>
<evidence type="ECO:0000303" key="6">
    <source>
    </source>
</evidence>
<evidence type="ECO:0000305" key="7"/>
<reference key="1">
    <citation type="journal article" date="2001" name="Biol. Reprod.">
        <title>Cloning of complementary deoxyribonucleic acids encoding quail (Coturnix coturnix japonica) retinoic acid receptor beta isoforms and changes in their gene expression during gonadotropic growth.</title>
        <authorList>
            <person name="Fu Z."/>
            <person name="Kubo T."/>
            <person name="Sugahara K."/>
            <person name="Noguchi T."/>
            <person name="Kato H."/>
        </authorList>
    </citation>
    <scope>NUCLEOTIDE SEQUENCE [MRNA] (ISOFORMS BETA-1 AND BETA-2)</scope>
    <scope>POSSIBLE FUNCTION</scope>
    <scope>TISSUE SPECIFICITY</scope>
</reference>
<name>RARB_COTJA</name>
<protein>
    <recommendedName>
        <fullName>Retinoic acid receptor beta</fullName>
        <shortName>RAR-beta</shortName>
    </recommendedName>
    <alternativeName>
        <fullName>Nuclear receptor subfamily 1 group B member 2</fullName>
    </alternativeName>
</protein>
<comment type="function">
    <text evidence="1">Receptor for retinoic acid. Retinoic acid receptors bind as heterodimers to their target response elements in response to their ligands, all-trans or 9-cis retinoic acid, and regulate gene expression in various biological processes. The RAR/RXR heterodimers bind to the retinoic acid response elements (RARE) composed of tandem 5'-AGGTCA-3' sites known as DR1-DR5 (By similarity). May be required for Sertoli cell differentiation and spermatogenesis.</text>
</comment>
<comment type="subunit">
    <text evidence="1">Heterodimer; with a RXR molecule. Binds DNA preferentially as a RAR/RXR heterodimer.</text>
</comment>
<comment type="subcellular location">
    <subcellularLocation>
        <location>Nucleus</location>
    </subcellularLocation>
</comment>
<comment type="alternative products">
    <event type="alternative splicing"/>
    <isoform>
        <id>Q9W6B3-1</id>
        <name>Beta-1</name>
        <sequence type="displayed"/>
    </isoform>
    <isoform>
        <id>Q9W6B3-2</id>
        <name>Beta-2</name>
        <sequence type="described" ref="VSP_009096"/>
    </isoform>
</comment>
<comment type="tissue specificity">
    <text evidence="5">Both isoforms expressed in heart, lung, kidney, liver, brain, lung and testis. Isoform Beta-1 is highly expressed in testes and brain. Levels increase during testes maturation. Isoform beta-2 is predominant in heart, kidney and lung.</text>
</comment>
<comment type="domain">
    <text>Composed of three domains: a modulating N-terminal domain, a DNA-binding domain and a C-terminal ligand-binding domain.</text>
</comment>
<comment type="similarity">
    <text evidence="7">Belongs to the nuclear hormone receptor family. NR1 subfamily.</text>
</comment>
<accession>Q9W6B3</accession>
<accession>Q910C7</accession>
<organism>
    <name type="scientific">Coturnix japonica</name>
    <name type="common">Japanese quail</name>
    <name type="synonym">Coturnix coturnix japonica</name>
    <dbReference type="NCBI Taxonomy" id="93934"/>
    <lineage>
        <taxon>Eukaryota</taxon>
        <taxon>Metazoa</taxon>
        <taxon>Chordata</taxon>
        <taxon>Craniata</taxon>
        <taxon>Vertebrata</taxon>
        <taxon>Euteleostomi</taxon>
        <taxon>Archelosauria</taxon>
        <taxon>Archosauria</taxon>
        <taxon>Dinosauria</taxon>
        <taxon>Saurischia</taxon>
        <taxon>Theropoda</taxon>
        <taxon>Coelurosauria</taxon>
        <taxon>Aves</taxon>
        <taxon>Neognathae</taxon>
        <taxon>Galloanserae</taxon>
        <taxon>Galliformes</taxon>
        <taxon>Phasianidae</taxon>
        <taxon>Perdicinae</taxon>
        <taxon>Coturnix</taxon>
    </lineage>
</organism>
<feature type="chain" id="PRO_0000053470" description="Retinoic acid receptor beta">
    <location>
        <begin position="1"/>
        <end position="455"/>
    </location>
</feature>
<feature type="domain" description="NR LBD" evidence="3">
    <location>
        <begin position="183"/>
        <end position="417"/>
    </location>
</feature>
<feature type="DNA-binding region" description="Nuclear receptor" evidence="2">
    <location>
        <begin position="88"/>
        <end position="153"/>
    </location>
</feature>
<feature type="zinc finger region" description="NR C4-type" evidence="2">
    <location>
        <begin position="88"/>
        <end position="108"/>
    </location>
</feature>
<feature type="zinc finger region" description="NR C4-type" evidence="2">
    <location>
        <begin position="124"/>
        <end position="148"/>
    </location>
</feature>
<feature type="region of interest" description="Modulating" evidence="1">
    <location>
        <begin position="1"/>
        <end position="87"/>
    </location>
</feature>
<feature type="region of interest" description="Disordered" evidence="4">
    <location>
        <begin position="45"/>
        <end position="78"/>
    </location>
</feature>
<feature type="region of interest" description="Hinge" evidence="1">
    <location>
        <begin position="154"/>
        <end position="182"/>
    </location>
</feature>
<feature type="region of interest" description="Disordered" evidence="4">
    <location>
        <begin position="416"/>
        <end position="455"/>
    </location>
</feature>
<feature type="compositionally biased region" description="Polar residues" evidence="4">
    <location>
        <begin position="47"/>
        <end position="66"/>
    </location>
</feature>
<feature type="compositionally biased region" description="Polar residues" evidence="4">
    <location>
        <begin position="424"/>
        <end position="434"/>
    </location>
</feature>
<feature type="compositionally biased region" description="Low complexity" evidence="4">
    <location>
        <begin position="435"/>
        <end position="455"/>
    </location>
</feature>
<feature type="splice variant" id="VSP_009096" description="In isoform Beta-2." evidence="6">
    <original>MTTSSRTCPVPAVNGHMTHYPAAPYPLLFPPVIGGLSLPSLHGLQSHPPTSGCSTPSPA</original>
    <variation>MFDCMDVLAVSPAQMLDFYTASPSSCMLQEKALKACFSGLAQTEWQHRHSAQ</variation>
    <location>
        <begin position="1"/>
        <end position="59"/>
    </location>
</feature>
<sequence>MTTSSRTCPVPAVNGHMTHYPAAPYPLLFPPVIGGLSLPSLHGLQSHPPTSGCSTPSPASVETQSTSSEELVPSPPSPLPPPRVYKPCFVCQDKSSGYHYGVSACEGCKGFFRRSIQKNMVYTCHRDKNCVINKVTRNRCQYCRLQKCFEVGMSKESVRNDRNKKKKEPTKQESTENYEMTAELDDLTEKIRKAHQETFPSLCQLGKYTTNSSADHRVRLDLGLWDKFSELATKCIIKIVEFAKRLPGFTSLTIADQITLLKAACLDILILRICTRYTPEQDTMTFSDGLTLNRTQMHNAGFGPLTDLVFTFANQLLPLEMDDTETGLLSAICLICGDRQDLEEPMKVDKLQEPLLEALKIYIRKRRPNKPHMFPKILMKITDLRSISAKGAERVITLKMEIPGSMPPLIQEMLENSEGHEPLTPTSNGNTAEHSPSISPSSVDNSSVSQSPMVQ</sequence>
<keyword id="KW-0025">Alternative splicing</keyword>
<keyword id="KW-0238">DNA-binding</keyword>
<keyword id="KW-0479">Metal-binding</keyword>
<keyword id="KW-0539">Nucleus</keyword>
<keyword id="KW-0675">Receptor</keyword>
<keyword id="KW-1185">Reference proteome</keyword>
<keyword id="KW-0804">Transcription</keyword>
<keyword id="KW-0805">Transcription regulation</keyword>
<keyword id="KW-0862">Zinc</keyword>
<keyword id="KW-0863">Zinc-finger</keyword>
<dbReference type="EMBL" id="AF110729">
    <property type="protein sequence ID" value="AAD23397.1"/>
    <property type="molecule type" value="mRNA"/>
</dbReference>
<dbReference type="EMBL" id="AF110730">
    <property type="protein sequence ID" value="AAD23398.1"/>
    <property type="molecule type" value="mRNA"/>
</dbReference>
<dbReference type="SMR" id="Q9W6B3"/>
<dbReference type="Proteomes" id="UP000694412">
    <property type="component" value="Unplaced"/>
</dbReference>
<dbReference type="GO" id="GO:0005634">
    <property type="term" value="C:nucleus"/>
    <property type="evidence" value="ECO:0007669"/>
    <property type="project" value="UniProtKB-SubCell"/>
</dbReference>
<dbReference type="GO" id="GO:0005667">
    <property type="term" value="C:transcription regulator complex"/>
    <property type="evidence" value="ECO:0007669"/>
    <property type="project" value="TreeGrafter"/>
</dbReference>
<dbReference type="GO" id="GO:0035259">
    <property type="term" value="F:nuclear glucocorticoid receptor binding"/>
    <property type="evidence" value="ECO:0007669"/>
    <property type="project" value="TreeGrafter"/>
</dbReference>
<dbReference type="GO" id="GO:0004879">
    <property type="term" value="F:nuclear receptor activity"/>
    <property type="evidence" value="ECO:0007669"/>
    <property type="project" value="InterPro"/>
</dbReference>
<dbReference type="GO" id="GO:0000978">
    <property type="term" value="F:RNA polymerase II cis-regulatory region sequence-specific DNA binding"/>
    <property type="evidence" value="ECO:0007669"/>
    <property type="project" value="TreeGrafter"/>
</dbReference>
<dbReference type="GO" id="GO:0008270">
    <property type="term" value="F:zinc ion binding"/>
    <property type="evidence" value="ECO:0007669"/>
    <property type="project" value="UniProtKB-KW"/>
</dbReference>
<dbReference type="GO" id="GO:0071376">
    <property type="term" value="P:cellular response to corticotropin-releasing hormone stimulus"/>
    <property type="evidence" value="ECO:0007669"/>
    <property type="project" value="TreeGrafter"/>
</dbReference>
<dbReference type="GO" id="GO:0048384">
    <property type="term" value="P:retinoic acid receptor signaling pathway"/>
    <property type="evidence" value="ECO:0007669"/>
    <property type="project" value="InterPro"/>
</dbReference>
<dbReference type="CDD" id="cd06964">
    <property type="entry name" value="NR_DBD_RAR"/>
    <property type="match status" value="1"/>
</dbReference>
<dbReference type="CDD" id="cd06937">
    <property type="entry name" value="NR_LBD_RAR"/>
    <property type="match status" value="1"/>
</dbReference>
<dbReference type="FunFam" id="1.10.565.10:FF:000073">
    <property type="entry name" value="Retinoic acid receptor beta"/>
    <property type="match status" value="1"/>
</dbReference>
<dbReference type="FunFam" id="3.30.50.10:FF:000004">
    <property type="entry name" value="Retinoic acid receptor beta isoform"/>
    <property type="match status" value="1"/>
</dbReference>
<dbReference type="Gene3D" id="3.30.50.10">
    <property type="entry name" value="Erythroid Transcription Factor GATA-1, subunit A"/>
    <property type="match status" value="1"/>
</dbReference>
<dbReference type="Gene3D" id="1.10.565.10">
    <property type="entry name" value="Retinoid X Receptor"/>
    <property type="match status" value="1"/>
</dbReference>
<dbReference type="InterPro" id="IPR035500">
    <property type="entry name" value="NHR-like_dom_sf"/>
</dbReference>
<dbReference type="InterPro" id="IPR047159">
    <property type="entry name" value="NR_DBD_RAR"/>
</dbReference>
<dbReference type="InterPro" id="IPR047158">
    <property type="entry name" value="NR_LBD_RAR"/>
</dbReference>
<dbReference type="InterPro" id="IPR000536">
    <property type="entry name" value="Nucl_hrmn_rcpt_lig-bd"/>
</dbReference>
<dbReference type="InterPro" id="IPR001723">
    <property type="entry name" value="Nuclear_hrmn_rcpt"/>
</dbReference>
<dbReference type="InterPro" id="IPR003078">
    <property type="entry name" value="Retinoic_acid_rcpt"/>
</dbReference>
<dbReference type="InterPro" id="IPR001628">
    <property type="entry name" value="Znf_hrmn_rcpt"/>
</dbReference>
<dbReference type="InterPro" id="IPR013088">
    <property type="entry name" value="Znf_NHR/GATA"/>
</dbReference>
<dbReference type="PANTHER" id="PTHR24085">
    <property type="entry name" value="NUCLEAR HORMONE RECEPTOR"/>
    <property type="match status" value="1"/>
</dbReference>
<dbReference type="PANTHER" id="PTHR24085:SF5">
    <property type="entry name" value="RETINOIC ACID RECEPTOR BETA"/>
    <property type="match status" value="1"/>
</dbReference>
<dbReference type="Pfam" id="PF00104">
    <property type="entry name" value="Hormone_recep"/>
    <property type="match status" value="1"/>
</dbReference>
<dbReference type="Pfam" id="PF00105">
    <property type="entry name" value="zf-C4"/>
    <property type="match status" value="1"/>
</dbReference>
<dbReference type="PRINTS" id="PR01292">
    <property type="entry name" value="RETNOICACIDR"/>
</dbReference>
<dbReference type="PRINTS" id="PR00398">
    <property type="entry name" value="STRDHORMONER"/>
</dbReference>
<dbReference type="PRINTS" id="PR00047">
    <property type="entry name" value="STROIDFINGER"/>
</dbReference>
<dbReference type="SMART" id="SM00430">
    <property type="entry name" value="HOLI"/>
    <property type="match status" value="1"/>
</dbReference>
<dbReference type="SMART" id="SM00399">
    <property type="entry name" value="ZnF_C4"/>
    <property type="match status" value="1"/>
</dbReference>
<dbReference type="SUPFAM" id="SSF57716">
    <property type="entry name" value="Glucocorticoid receptor-like (DNA-binding domain)"/>
    <property type="match status" value="1"/>
</dbReference>
<dbReference type="SUPFAM" id="SSF48508">
    <property type="entry name" value="Nuclear receptor ligand-binding domain"/>
    <property type="match status" value="1"/>
</dbReference>
<dbReference type="PROSITE" id="PS51843">
    <property type="entry name" value="NR_LBD"/>
    <property type="match status" value="1"/>
</dbReference>
<dbReference type="PROSITE" id="PS00031">
    <property type="entry name" value="NUCLEAR_REC_DBD_1"/>
    <property type="match status" value="1"/>
</dbReference>
<dbReference type="PROSITE" id="PS51030">
    <property type="entry name" value="NUCLEAR_REC_DBD_2"/>
    <property type="match status" value="1"/>
</dbReference>
<proteinExistence type="evidence at transcript level"/>
<gene>
    <name type="primary">RARB</name>
    <name type="synonym">NR1B2</name>
</gene>